<reference key="1">
    <citation type="submission" date="2008-08" db="EMBL/GenBank/DDBJ databases">
        <title>Complete sequence of Anaeromyxobacter sp. K.</title>
        <authorList>
            <consortium name="US DOE Joint Genome Institute"/>
            <person name="Lucas S."/>
            <person name="Copeland A."/>
            <person name="Lapidus A."/>
            <person name="Glavina del Rio T."/>
            <person name="Dalin E."/>
            <person name="Tice H."/>
            <person name="Bruce D."/>
            <person name="Goodwin L."/>
            <person name="Pitluck S."/>
            <person name="Saunders E."/>
            <person name="Brettin T."/>
            <person name="Detter J.C."/>
            <person name="Han C."/>
            <person name="Larimer F."/>
            <person name="Land M."/>
            <person name="Hauser L."/>
            <person name="Kyrpides N."/>
            <person name="Ovchinnikiva G."/>
            <person name="Beliaev A."/>
        </authorList>
    </citation>
    <scope>NUCLEOTIDE SEQUENCE [LARGE SCALE GENOMIC DNA]</scope>
    <source>
        <strain>K</strain>
    </source>
</reference>
<evidence type="ECO:0000255" key="1">
    <source>
        <dbReference type="HAMAP-Rule" id="MF_00386"/>
    </source>
</evidence>
<gene>
    <name type="ordered locus">AnaeK_4496</name>
</gene>
<proteinExistence type="inferred from homology"/>
<feature type="chain" id="PRO_1000122612" description="Putative membrane protein insertion efficiency factor">
    <location>
        <begin position="1"/>
        <end position="76"/>
    </location>
</feature>
<protein>
    <recommendedName>
        <fullName evidence="1">Putative membrane protein insertion efficiency factor</fullName>
    </recommendedName>
</protein>
<name>YIDD_ANASK</name>
<organism>
    <name type="scientific">Anaeromyxobacter sp. (strain K)</name>
    <dbReference type="NCBI Taxonomy" id="447217"/>
    <lineage>
        <taxon>Bacteria</taxon>
        <taxon>Pseudomonadati</taxon>
        <taxon>Myxococcota</taxon>
        <taxon>Myxococcia</taxon>
        <taxon>Myxococcales</taxon>
        <taxon>Cystobacterineae</taxon>
        <taxon>Anaeromyxobacteraceae</taxon>
        <taxon>Anaeromyxobacter</taxon>
    </lineage>
</organism>
<sequence>MIRAALVLLVRIYQRLVSPLLPPACRFYPSCSAYAVTALQRHGALRGSWLTVRRLCRCHPFHAGGVDPVPELTPKR</sequence>
<accession>B4UKG2</accession>
<dbReference type="EMBL" id="CP001131">
    <property type="protein sequence ID" value="ACG75698.1"/>
    <property type="molecule type" value="Genomic_DNA"/>
</dbReference>
<dbReference type="RefSeq" id="WP_012528441.1">
    <property type="nucleotide sequence ID" value="NC_011145.1"/>
</dbReference>
<dbReference type="KEGG" id="ank:AnaeK_4496"/>
<dbReference type="HOGENOM" id="CLU_144811_6_0_7"/>
<dbReference type="OrthoDB" id="9801753at2"/>
<dbReference type="Proteomes" id="UP000001871">
    <property type="component" value="Chromosome"/>
</dbReference>
<dbReference type="GO" id="GO:0005886">
    <property type="term" value="C:plasma membrane"/>
    <property type="evidence" value="ECO:0007669"/>
    <property type="project" value="UniProtKB-SubCell"/>
</dbReference>
<dbReference type="HAMAP" id="MF_00386">
    <property type="entry name" value="UPF0161_YidD"/>
    <property type="match status" value="1"/>
</dbReference>
<dbReference type="InterPro" id="IPR002696">
    <property type="entry name" value="Membr_insert_effic_factor_YidD"/>
</dbReference>
<dbReference type="NCBIfam" id="TIGR00278">
    <property type="entry name" value="membrane protein insertion efficiency factor YidD"/>
    <property type="match status" value="1"/>
</dbReference>
<dbReference type="PANTHER" id="PTHR33383">
    <property type="entry name" value="MEMBRANE PROTEIN INSERTION EFFICIENCY FACTOR-RELATED"/>
    <property type="match status" value="1"/>
</dbReference>
<dbReference type="PANTHER" id="PTHR33383:SF1">
    <property type="entry name" value="MEMBRANE PROTEIN INSERTION EFFICIENCY FACTOR-RELATED"/>
    <property type="match status" value="1"/>
</dbReference>
<dbReference type="Pfam" id="PF01809">
    <property type="entry name" value="YidD"/>
    <property type="match status" value="1"/>
</dbReference>
<dbReference type="SMART" id="SM01234">
    <property type="entry name" value="Haemolytic"/>
    <property type="match status" value="1"/>
</dbReference>
<comment type="function">
    <text evidence="1">Could be involved in insertion of integral membrane proteins into the membrane.</text>
</comment>
<comment type="subcellular location">
    <subcellularLocation>
        <location evidence="1">Cell inner membrane</location>
        <topology evidence="1">Peripheral membrane protein</topology>
        <orientation evidence="1">Cytoplasmic side</orientation>
    </subcellularLocation>
</comment>
<comment type="similarity">
    <text evidence="1">Belongs to the UPF0161 family.</text>
</comment>
<keyword id="KW-0997">Cell inner membrane</keyword>
<keyword id="KW-1003">Cell membrane</keyword>
<keyword id="KW-0472">Membrane</keyword>